<keyword id="KW-0067">ATP-binding</keyword>
<keyword id="KW-0315">Glutamine amidotransferase</keyword>
<keyword id="KW-0332">GMP biosynthesis</keyword>
<keyword id="KW-0436">Ligase</keyword>
<keyword id="KW-0547">Nucleotide-binding</keyword>
<keyword id="KW-0658">Purine biosynthesis</keyword>
<dbReference type="EC" id="6.3.5.2" evidence="1"/>
<dbReference type="EMBL" id="CP001164">
    <property type="protein sequence ID" value="ACI36449.1"/>
    <property type="molecule type" value="Genomic_DNA"/>
</dbReference>
<dbReference type="RefSeq" id="WP_000138282.1">
    <property type="nucleotide sequence ID" value="NC_011353.1"/>
</dbReference>
<dbReference type="SMR" id="B5Z0X6"/>
<dbReference type="MEROPS" id="C26.957"/>
<dbReference type="GeneID" id="75172615"/>
<dbReference type="KEGG" id="ecf:ECH74115_3731"/>
<dbReference type="HOGENOM" id="CLU_014340_0_5_6"/>
<dbReference type="UniPathway" id="UPA00189">
    <property type="reaction ID" value="UER00296"/>
</dbReference>
<dbReference type="GO" id="GO:0005829">
    <property type="term" value="C:cytosol"/>
    <property type="evidence" value="ECO:0007669"/>
    <property type="project" value="TreeGrafter"/>
</dbReference>
<dbReference type="GO" id="GO:0005524">
    <property type="term" value="F:ATP binding"/>
    <property type="evidence" value="ECO:0007669"/>
    <property type="project" value="UniProtKB-UniRule"/>
</dbReference>
<dbReference type="GO" id="GO:0003921">
    <property type="term" value="F:GMP synthase activity"/>
    <property type="evidence" value="ECO:0007669"/>
    <property type="project" value="InterPro"/>
</dbReference>
<dbReference type="CDD" id="cd01742">
    <property type="entry name" value="GATase1_GMP_Synthase"/>
    <property type="match status" value="1"/>
</dbReference>
<dbReference type="CDD" id="cd01997">
    <property type="entry name" value="GMP_synthase_C"/>
    <property type="match status" value="1"/>
</dbReference>
<dbReference type="FunFam" id="3.30.300.10:FF:000002">
    <property type="entry name" value="GMP synthase [glutamine-hydrolyzing]"/>
    <property type="match status" value="1"/>
</dbReference>
<dbReference type="FunFam" id="3.40.50.620:FF:000001">
    <property type="entry name" value="GMP synthase [glutamine-hydrolyzing]"/>
    <property type="match status" value="1"/>
</dbReference>
<dbReference type="FunFam" id="3.40.50.880:FF:000001">
    <property type="entry name" value="GMP synthase [glutamine-hydrolyzing]"/>
    <property type="match status" value="1"/>
</dbReference>
<dbReference type="Gene3D" id="3.30.300.10">
    <property type="match status" value="1"/>
</dbReference>
<dbReference type="Gene3D" id="3.40.50.880">
    <property type="match status" value="1"/>
</dbReference>
<dbReference type="Gene3D" id="3.40.50.620">
    <property type="entry name" value="HUPs"/>
    <property type="match status" value="1"/>
</dbReference>
<dbReference type="HAMAP" id="MF_00344">
    <property type="entry name" value="GMP_synthase"/>
    <property type="match status" value="1"/>
</dbReference>
<dbReference type="InterPro" id="IPR029062">
    <property type="entry name" value="Class_I_gatase-like"/>
</dbReference>
<dbReference type="InterPro" id="IPR017926">
    <property type="entry name" value="GATASE"/>
</dbReference>
<dbReference type="InterPro" id="IPR001674">
    <property type="entry name" value="GMP_synth_C"/>
</dbReference>
<dbReference type="InterPro" id="IPR004739">
    <property type="entry name" value="GMP_synth_GATase"/>
</dbReference>
<dbReference type="InterPro" id="IPR022955">
    <property type="entry name" value="GMP_synthase"/>
</dbReference>
<dbReference type="InterPro" id="IPR025777">
    <property type="entry name" value="GMPS_ATP_PPase_dom"/>
</dbReference>
<dbReference type="InterPro" id="IPR022310">
    <property type="entry name" value="NAD/GMP_synthase"/>
</dbReference>
<dbReference type="InterPro" id="IPR014729">
    <property type="entry name" value="Rossmann-like_a/b/a_fold"/>
</dbReference>
<dbReference type="NCBIfam" id="TIGR00884">
    <property type="entry name" value="guaA_Cterm"/>
    <property type="match status" value="1"/>
</dbReference>
<dbReference type="NCBIfam" id="TIGR00888">
    <property type="entry name" value="guaA_Nterm"/>
    <property type="match status" value="1"/>
</dbReference>
<dbReference type="NCBIfam" id="NF000848">
    <property type="entry name" value="PRK00074.1"/>
    <property type="match status" value="1"/>
</dbReference>
<dbReference type="PANTHER" id="PTHR11922:SF2">
    <property type="entry name" value="GMP SYNTHASE [GLUTAMINE-HYDROLYZING]"/>
    <property type="match status" value="1"/>
</dbReference>
<dbReference type="PANTHER" id="PTHR11922">
    <property type="entry name" value="GMP SYNTHASE-RELATED"/>
    <property type="match status" value="1"/>
</dbReference>
<dbReference type="Pfam" id="PF00117">
    <property type="entry name" value="GATase"/>
    <property type="match status" value="1"/>
</dbReference>
<dbReference type="Pfam" id="PF00958">
    <property type="entry name" value="GMP_synt_C"/>
    <property type="match status" value="1"/>
</dbReference>
<dbReference type="Pfam" id="PF02540">
    <property type="entry name" value="NAD_synthase"/>
    <property type="match status" value="1"/>
</dbReference>
<dbReference type="PRINTS" id="PR00097">
    <property type="entry name" value="ANTSNTHASEII"/>
</dbReference>
<dbReference type="PRINTS" id="PR00099">
    <property type="entry name" value="CPSGATASE"/>
</dbReference>
<dbReference type="PRINTS" id="PR00096">
    <property type="entry name" value="GATASE"/>
</dbReference>
<dbReference type="SUPFAM" id="SSF52402">
    <property type="entry name" value="Adenine nucleotide alpha hydrolases-like"/>
    <property type="match status" value="1"/>
</dbReference>
<dbReference type="SUPFAM" id="SSF52317">
    <property type="entry name" value="Class I glutamine amidotransferase-like"/>
    <property type="match status" value="1"/>
</dbReference>
<dbReference type="SUPFAM" id="SSF54810">
    <property type="entry name" value="GMP synthetase C-terminal dimerisation domain"/>
    <property type="match status" value="1"/>
</dbReference>
<dbReference type="PROSITE" id="PS51273">
    <property type="entry name" value="GATASE_TYPE_1"/>
    <property type="match status" value="1"/>
</dbReference>
<dbReference type="PROSITE" id="PS51553">
    <property type="entry name" value="GMPS_ATP_PPASE"/>
    <property type="match status" value="1"/>
</dbReference>
<proteinExistence type="inferred from homology"/>
<feature type="chain" id="PRO_1000120280" description="GMP synthase [glutamine-hydrolyzing]">
    <location>
        <begin position="1"/>
        <end position="525"/>
    </location>
</feature>
<feature type="domain" description="Glutamine amidotransferase type-1" evidence="1">
    <location>
        <begin position="9"/>
        <end position="207"/>
    </location>
</feature>
<feature type="domain" description="GMPS ATP-PPase" evidence="1">
    <location>
        <begin position="208"/>
        <end position="400"/>
    </location>
</feature>
<feature type="active site" description="Nucleophile" evidence="1">
    <location>
        <position position="86"/>
    </location>
</feature>
<feature type="active site" evidence="1">
    <location>
        <position position="181"/>
    </location>
</feature>
<feature type="active site" evidence="1">
    <location>
        <position position="183"/>
    </location>
</feature>
<feature type="binding site" evidence="1">
    <location>
        <begin position="235"/>
        <end position="241"/>
    </location>
    <ligand>
        <name>ATP</name>
        <dbReference type="ChEBI" id="CHEBI:30616"/>
    </ligand>
</feature>
<gene>
    <name evidence="1" type="primary">guaA</name>
    <name type="ordered locus">ECH74115_3731</name>
</gene>
<organism>
    <name type="scientific">Escherichia coli O157:H7 (strain EC4115 / EHEC)</name>
    <dbReference type="NCBI Taxonomy" id="444450"/>
    <lineage>
        <taxon>Bacteria</taxon>
        <taxon>Pseudomonadati</taxon>
        <taxon>Pseudomonadota</taxon>
        <taxon>Gammaproteobacteria</taxon>
        <taxon>Enterobacterales</taxon>
        <taxon>Enterobacteriaceae</taxon>
        <taxon>Escherichia</taxon>
    </lineage>
</organism>
<comment type="function">
    <text evidence="1">Catalyzes the synthesis of GMP from XMP.</text>
</comment>
<comment type="catalytic activity">
    <reaction evidence="1">
        <text>XMP + L-glutamine + ATP + H2O = GMP + L-glutamate + AMP + diphosphate + 2 H(+)</text>
        <dbReference type="Rhea" id="RHEA:11680"/>
        <dbReference type="ChEBI" id="CHEBI:15377"/>
        <dbReference type="ChEBI" id="CHEBI:15378"/>
        <dbReference type="ChEBI" id="CHEBI:29985"/>
        <dbReference type="ChEBI" id="CHEBI:30616"/>
        <dbReference type="ChEBI" id="CHEBI:33019"/>
        <dbReference type="ChEBI" id="CHEBI:57464"/>
        <dbReference type="ChEBI" id="CHEBI:58115"/>
        <dbReference type="ChEBI" id="CHEBI:58359"/>
        <dbReference type="ChEBI" id="CHEBI:456215"/>
        <dbReference type="EC" id="6.3.5.2"/>
    </reaction>
</comment>
<comment type="pathway">
    <text evidence="1">Purine metabolism; GMP biosynthesis; GMP from XMP (L-Gln route): step 1/1.</text>
</comment>
<comment type="subunit">
    <text evidence="1">Homodimer.</text>
</comment>
<accession>B5Z0X6</accession>
<reference key="1">
    <citation type="journal article" date="2011" name="Proc. Natl. Acad. Sci. U.S.A.">
        <title>Genomic anatomy of Escherichia coli O157:H7 outbreaks.</title>
        <authorList>
            <person name="Eppinger M."/>
            <person name="Mammel M.K."/>
            <person name="Leclerc J.E."/>
            <person name="Ravel J."/>
            <person name="Cebula T.A."/>
        </authorList>
    </citation>
    <scope>NUCLEOTIDE SEQUENCE [LARGE SCALE GENOMIC DNA]</scope>
    <source>
        <strain>EC4115 / EHEC</strain>
    </source>
</reference>
<sequence length="525" mass="58665">MTENIHKHRILILDFGSQYTQLVARRVRELGVYCELWAWDVTEAQIRDFNPSGIILSGGPESTTEENSPRAPQYVFEAGVPVFGVCYGMQTMAMQLGGHVEASNEREFGYAQVEVVNDSALVRGIEDALTADGKPLLDVWMSHGDKVTAIPSDFVTVASTESCPFAIMANEEKRFYGVQFHPEVTHTRQGMRMLERFVRDICQCEALWTPAKIIDDAVARIREQVGDDKVILGLSGGVDSSVTAMLLHRAIGKNLTCVFVDNGLLRLNEAEQVLDMFGDHFGLNIVHVPAEDRFLSALAGENDPEAKRKIIGRVFVEVFDEEALKLEDVKWLAQGTIYPDVIESAASATGKAHVIKSHHNVGGLPKEMKMGLVEPLKELFKDEVRKIGLELGLPYDMLYRHPFPGPGLGVRVLGEVKKEYCDLLRRADAIFIEELRKADLYDKVSQAFTVFLPVRSVGVMGDGRKYDWVVSLRAVETIDFMTAHWAHLPYDFLGRVSNRIINEVNGISRVVYDISGKPPATIEWE</sequence>
<evidence type="ECO:0000255" key="1">
    <source>
        <dbReference type="HAMAP-Rule" id="MF_00344"/>
    </source>
</evidence>
<name>GUAA_ECO5E</name>
<protein>
    <recommendedName>
        <fullName evidence="1">GMP synthase [glutamine-hydrolyzing]</fullName>
        <ecNumber evidence="1">6.3.5.2</ecNumber>
    </recommendedName>
    <alternativeName>
        <fullName evidence="1">GMP synthetase</fullName>
    </alternativeName>
    <alternativeName>
        <fullName evidence="1">Glutamine amidotransferase</fullName>
    </alternativeName>
</protein>